<gene>
    <name evidence="1" type="primary">pcyA</name>
    <name type="ordered locus">P9301_08071</name>
</gene>
<protein>
    <recommendedName>
        <fullName evidence="1">Phycocyanobilin:ferredoxin oxidoreductase</fullName>
        <ecNumber evidence="1">1.3.7.5</ecNumber>
    </recommendedName>
</protein>
<dbReference type="EC" id="1.3.7.5" evidence="1"/>
<dbReference type="EMBL" id="CP000576">
    <property type="protein sequence ID" value="ABO17430.1"/>
    <property type="molecule type" value="Genomic_DNA"/>
</dbReference>
<dbReference type="RefSeq" id="WP_011862786.1">
    <property type="nucleotide sequence ID" value="NC_009091.1"/>
</dbReference>
<dbReference type="SMR" id="A3PCF5"/>
<dbReference type="STRING" id="167546.P9301_08071"/>
<dbReference type="KEGG" id="pmg:P9301_08071"/>
<dbReference type="eggNOG" id="ENOG502Z7RN">
    <property type="taxonomic scope" value="Bacteria"/>
</dbReference>
<dbReference type="HOGENOM" id="CLU_074224_0_0_3"/>
<dbReference type="OrthoDB" id="581340at2"/>
<dbReference type="Proteomes" id="UP000001430">
    <property type="component" value="Chromosome"/>
</dbReference>
<dbReference type="GO" id="GO:0050897">
    <property type="term" value="F:cobalt ion binding"/>
    <property type="evidence" value="ECO:0007669"/>
    <property type="project" value="InterPro"/>
</dbReference>
<dbReference type="GO" id="GO:0050620">
    <property type="term" value="F:phycocyanobilin:ferredoxin oxidoreductase activity"/>
    <property type="evidence" value="ECO:0007669"/>
    <property type="project" value="UniProtKB-UniRule"/>
</dbReference>
<dbReference type="GO" id="GO:0010024">
    <property type="term" value="P:phytochromobilin biosynthetic process"/>
    <property type="evidence" value="ECO:0007669"/>
    <property type="project" value="InterPro"/>
</dbReference>
<dbReference type="Gene3D" id="3.40.1500.20">
    <property type="match status" value="1"/>
</dbReference>
<dbReference type="HAMAP" id="MF_00618">
    <property type="entry name" value="Ferredoxin_bilin_red"/>
    <property type="match status" value="1"/>
</dbReference>
<dbReference type="InterPro" id="IPR009249">
    <property type="entry name" value="Ferredoxin-dep_bilin_Rdtase"/>
</dbReference>
<dbReference type="InterPro" id="IPR022870">
    <property type="entry name" value="Ferredoxin_bilin_OxRdtase"/>
</dbReference>
<dbReference type="NCBIfam" id="NF002760">
    <property type="entry name" value="PRK02816.1"/>
    <property type="match status" value="1"/>
</dbReference>
<dbReference type="PANTHER" id="PTHR34557">
    <property type="entry name" value="PHYTOCHROMOBILIN:FERREDOXIN OXIDOREDUCTASE, CHLOROPLASTIC"/>
    <property type="match status" value="1"/>
</dbReference>
<dbReference type="PANTHER" id="PTHR34557:SF1">
    <property type="entry name" value="PHYTOCHROMOBILIN:FERREDOXIN OXIDOREDUCTASE, CHLOROPLASTIC"/>
    <property type="match status" value="1"/>
</dbReference>
<dbReference type="Pfam" id="PF05996">
    <property type="entry name" value="Fe_bilin_red"/>
    <property type="match status" value="1"/>
</dbReference>
<accession>A3PCF5</accession>
<organism>
    <name type="scientific">Prochlorococcus marinus (strain MIT 9301)</name>
    <dbReference type="NCBI Taxonomy" id="167546"/>
    <lineage>
        <taxon>Bacteria</taxon>
        <taxon>Bacillati</taxon>
        <taxon>Cyanobacteriota</taxon>
        <taxon>Cyanophyceae</taxon>
        <taxon>Synechococcales</taxon>
        <taxon>Prochlorococcaceae</taxon>
        <taxon>Prochlorococcus</taxon>
    </lineage>
</organism>
<name>PCYA_PROM0</name>
<sequence>MLSESLTKTKLTDPLILDLLQNIRKHRSMLEDLKSIKIDPNLTNIISNEIGRELYIENEFHKAKGFRKLHIEVAEFSKNLRILHCVFFPDPKFDIPIFGMDLVKINDIVSAAIVDLSPASQNQALKYEKLLSGVDKSSFTSLREIPKWGRIFSNNVFFASLRNKSEKNDFCSVVDQYLSILIKLSKKAKPEFNEEIIQERIDFQKNYCAQQMKNEKTSMVLLKYFDEKWVNNYIKTVLFDF</sequence>
<proteinExistence type="inferred from homology"/>
<reference key="1">
    <citation type="journal article" date="2007" name="PLoS Genet.">
        <title>Patterns and implications of gene gain and loss in the evolution of Prochlorococcus.</title>
        <authorList>
            <person name="Kettler G.C."/>
            <person name="Martiny A.C."/>
            <person name="Huang K."/>
            <person name="Zucker J."/>
            <person name="Coleman M.L."/>
            <person name="Rodrigue S."/>
            <person name="Chen F."/>
            <person name="Lapidus A."/>
            <person name="Ferriera S."/>
            <person name="Johnson J."/>
            <person name="Steglich C."/>
            <person name="Church G.M."/>
            <person name="Richardson P."/>
            <person name="Chisholm S.W."/>
        </authorList>
    </citation>
    <scope>NUCLEOTIDE SEQUENCE [LARGE SCALE GENOMIC DNA]</scope>
    <source>
        <strain>MIT 9301</strain>
    </source>
</reference>
<comment type="function">
    <text evidence="1">Catalyzes the four-electron reduction of biliverdin IX-alpha (2-electron reduction at both the A and D rings); the reaction proceeds via an isolatable 2-electron intermediate, 181,182-dihydrobiliverdin.</text>
</comment>
<comment type="catalytic activity">
    <reaction evidence="1">
        <text>(2R,3Z)-phycocyanobilin + 4 oxidized [2Fe-2S]-[ferredoxin] = biliverdin IXalpha + 4 reduced [2Fe-2S]-[ferredoxin] + 4 H(+)</text>
        <dbReference type="Rhea" id="RHEA:15309"/>
        <dbReference type="Rhea" id="RHEA-COMP:10000"/>
        <dbReference type="Rhea" id="RHEA-COMP:10001"/>
        <dbReference type="ChEBI" id="CHEBI:15378"/>
        <dbReference type="ChEBI" id="CHEBI:33737"/>
        <dbReference type="ChEBI" id="CHEBI:33738"/>
        <dbReference type="ChEBI" id="CHEBI:57437"/>
        <dbReference type="ChEBI" id="CHEBI:57991"/>
        <dbReference type="EC" id="1.3.7.5"/>
    </reaction>
</comment>
<comment type="similarity">
    <text evidence="1">Belongs to the HY2 family.</text>
</comment>
<keyword id="KW-0560">Oxidoreductase</keyword>
<keyword id="KW-1185">Reference proteome</keyword>
<feature type="chain" id="PRO_1000190496" description="Phycocyanobilin:ferredoxin oxidoreductase">
    <location>
        <begin position="1"/>
        <end position="241"/>
    </location>
</feature>
<evidence type="ECO:0000255" key="1">
    <source>
        <dbReference type="HAMAP-Rule" id="MF_00618"/>
    </source>
</evidence>